<dbReference type="EC" id="2.3.1.234" evidence="1"/>
<dbReference type="EMBL" id="CT573213">
    <property type="protein sequence ID" value="CAJ61441.1"/>
    <property type="molecule type" value="Genomic_DNA"/>
</dbReference>
<dbReference type="RefSeq" id="WP_011603949.1">
    <property type="nucleotide sequence ID" value="NC_008278.1"/>
</dbReference>
<dbReference type="SMR" id="Q0RM11"/>
<dbReference type="STRING" id="326424.FRAAL2797"/>
<dbReference type="KEGG" id="fal:FRAAL2797"/>
<dbReference type="eggNOG" id="COG0533">
    <property type="taxonomic scope" value="Bacteria"/>
</dbReference>
<dbReference type="HOGENOM" id="CLU_023208_0_2_11"/>
<dbReference type="OrthoDB" id="9806197at2"/>
<dbReference type="Proteomes" id="UP000000657">
    <property type="component" value="Chromosome"/>
</dbReference>
<dbReference type="GO" id="GO:0005737">
    <property type="term" value="C:cytoplasm"/>
    <property type="evidence" value="ECO:0007669"/>
    <property type="project" value="UniProtKB-SubCell"/>
</dbReference>
<dbReference type="GO" id="GO:0005506">
    <property type="term" value="F:iron ion binding"/>
    <property type="evidence" value="ECO:0007669"/>
    <property type="project" value="UniProtKB-UniRule"/>
</dbReference>
<dbReference type="GO" id="GO:0061711">
    <property type="term" value="F:N(6)-L-threonylcarbamoyladenine synthase activity"/>
    <property type="evidence" value="ECO:0007669"/>
    <property type="project" value="UniProtKB-EC"/>
</dbReference>
<dbReference type="GO" id="GO:0002949">
    <property type="term" value="P:tRNA threonylcarbamoyladenosine modification"/>
    <property type="evidence" value="ECO:0007669"/>
    <property type="project" value="UniProtKB-UniRule"/>
</dbReference>
<dbReference type="CDD" id="cd24133">
    <property type="entry name" value="ASKHA_NBD_TsaD_bac"/>
    <property type="match status" value="1"/>
</dbReference>
<dbReference type="FunFam" id="3.30.420.40:FF:000012">
    <property type="entry name" value="tRNA N6-adenosine threonylcarbamoyltransferase"/>
    <property type="match status" value="1"/>
</dbReference>
<dbReference type="FunFam" id="3.30.420.40:FF:000040">
    <property type="entry name" value="tRNA N6-adenosine threonylcarbamoyltransferase"/>
    <property type="match status" value="1"/>
</dbReference>
<dbReference type="Gene3D" id="3.30.420.40">
    <property type="match status" value="2"/>
</dbReference>
<dbReference type="HAMAP" id="MF_01445">
    <property type="entry name" value="TsaD"/>
    <property type="match status" value="1"/>
</dbReference>
<dbReference type="InterPro" id="IPR043129">
    <property type="entry name" value="ATPase_NBD"/>
</dbReference>
<dbReference type="InterPro" id="IPR000905">
    <property type="entry name" value="Gcp-like_dom"/>
</dbReference>
<dbReference type="InterPro" id="IPR017861">
    <property type="entry name" value="KAE1/TsaD"/>
</dbReference>
<dbReference type="InterPro" id="IPR017860">
    <property type="entry name" value="Peptidase_M22_CS"/>
</dbReference>
<dbReference type="InterPro" id="IPR022450">
    <property type="entry name" value="TsaD"/>
</dbReference>
<dbReference type="NCBIfam" id="TIGR00329">
    <property type="entry name" value="gcp_kae1"/>
    <property type="match status" value="1"/>
</dbReference>
<dbReference type="NCBIfam" id="TIGR03723">
    <property type="entry name" value="T6A_TsaD_YgjD"/>
    <property type="match status" value="1"/>
</dbReference>
<dbReference type="PANTHER" id="PTHR11735">
    <property type="entry name" value="TRNA N6-ADENOSINE THREONYLCARBAMOYLTRANSFERASE"/>
    <property type="match status" value="1"/>
</dbReference>
<dbReference type="PANTHER" id="PTHR11735:SF6">
    <property type="entry name" value="TRNA N6-ADENOSINE THREONYLCARBAMOYLTRANSFERASE, MITOCHONDRIAL"/>
    <property type="match status" value="1"/>
</dbReference>
<dbReference type="Pfam" id="PF00814">
    <property type="entry name" value="TsaD"/>
    <property type="match status" value="1"/>
</dbReference>
<dbReference type="PRINTS" id="PR00789">
    <property type="entry name" value="OSIALOPTASE"/>
</dbReference>
<dbReference type="SUPFAM" id="SSF53067">
    <property type="entry name" value="Actin-like ATPase domain"/>
    <property type="match status" value="1"/>
</dbReference>
<dbReference type="PROSITE" id="PS01016">
    <property type="entry name" value="GLYCOPROTEASE"/>
    <property type="match status" value="1"/>
</dbReference>
<gene>
    <name evidence="1" type="primary">tsaD</name>
    <name type="synonym">gcp</name>
    <name type="ordered locus">FRAAL2797</name>
</gene>
<protein>
    <recommendedName>
        <fullName evidence="1">tRNA N6-adenosine threonylcarbamoyltransferase</fullName>
        <ecNumber evidence="1">2.3.1.234</ecNumber>
    </recommendedName>
    <alternativeName>
        <fullName evidence="1">N6-L-threonylcarbamoyladenine synthase</fullName>
        <shortName evidence="1">t(6)A synthase</shortName>
    </alternativeName>
    <alternativeName>
        <fullName evidence="1">t(6)A37 threonylcarbamoyladenosine biosynthesis protein TsaD</fullName>
    </alternativeName>
    <alternativeName>
        <fullName evidence="1">tRNA threonylcarbamoyladenosine biosynthesis protein TsaD</fullName>
    </alternativeName>
</protein>
<reference key="1">
    <citation type="journal article" date="2007" name="Genome Res.">
        <title>Genome characteristics of facultatively symbiotic Frankia sp. strains reflect host range and host plant biogeography.</title>
        <authorList>
            <person name="Normand P."/>
            <person name="Lapierre P."/>
            <person name="Tisa L.S."/>
            <person name="Gogarten J.P."/>
            <person name="Alloisio N."/>
            <person name="Bagnarol E."/>
            <person name="Bassi C.A."/>
            <person name="Berry A.M."/>
            <person name="Bickhart D.M."/>
            <person name="Choisne N."/>
            <person name="Couloux A."/>
            <person name="Cournoyer B."/>
            <person name="Cruveiller S."/>
            <person name="Daubin V."/>
            <person name="Demange N."/>
            <person name="Francino M.P."/>
            <person name="Goltsman E."/>
            <person name="Huang Y."/>
            <person name="Kopp O.R."/>
            <person name="Labarre L."/>
            <person name="Lapidus A."/>
            <person name="Lavire C."/>
            <person name="Marechal J."/>
            <person name="Martinez M."/>
            <person name="Mastronunzio J.E."/>
            <person name="Mullin B.C."/>
            <person name="Niemann J."/>
            <person name="Pujic P."/>
            <person name="Rawnsley T."/>
            <person name="Rouy Z."/>
            <person name="Schenowitz C."/>
            <person name="Sellstedt A."/>
            <person name="Tavares F."/>
            <person name="Tomkins J.P."/>
            <person name="Vallenet D."/>
            <person name="Valverde C."/>
            <person name="Wall L.G."/>
            <person name="Wang Y."/>
            <person name="Medigue C."/>
            <person name="Benson D.R."/>
        </authorList>
    </citation>
    <scope>NUCLEOTIDE SEQUENCE [LARGE SCALE GENOMIC DNA]</scope>
    <source>
        <strain>DSM 45986 / CECT 9034 / ACN14a</strain>
    </source>
</reference>
<name>TSAD_FRAAA</name>
<accession>Q0RM11</accession>
<evidence type="ECO:0000255" key="1">
    <source>
        <dbReference type="HAMAP-Rule" id="MF_01445"/>
    </source>
</evidence>
<keyword id="KW-0012">Acyltransferase</keyword>
<keyword id="KW-0963">Cytoplasm</keyword>
<keyword id="KW-0408">Iron</keyword>
<keyword id="KW-0479">Metal-binding</keyword>
<keyword id="KW-1185">Reference proteome</keyword>
<keyword id="KW-0808">Transferase</keyword>
<keyword id="KW-0819">tRNA processing</keyword>
<sequence>MPVQPSPVVMGIETSCDETGVALVRDGVLLGDALSTSMDQHARYGGVVPEIAARAHVQALVPCVRAALASAGLTAADIGAVAVTAGPGLATALHVGVSAAKAYATALDVPFYGVHHLAGHLAADLVDGEPLPDPLIALIVSGGHTSLLRVGDLARDPIVHLGDTLDDAAGECFDKVARVLGLPYPGGPAVDREAVGNDPAALAFPRPLTGRTDSPYTFSFSGLKTAVARWVEAHPDSTVPAGDVIASFQEAVVDVLTAKAIRACRDHEIGDLLIVGGVAANSRLRALAAQRCEAAGLRLRIPARKRCTDNGVMIAALGDLLVRSGAAPSRPDLAAMPGAFLDQAQLGVVQPTQRAA</sequence>
<proteinExistence type="inferred from homology"/>
<comment type="function">
    <text evidence="1">Required for the formation of a threonylcarbamoyl group on adenosine at position 37 (t(6)A37) in tRNAs that read codons beginning with adenine. Is involved in the transfer of the threonylcarbamoyl moiety of threonylcarbamoyl-AMP (TC-AMP) to the N6 group of A37, together with TsaE and TsaB. TsaD likely plays a direct catalytic role in this reaction.</text>
</comment>
<comment type="catalytic activity">
    <reaction evidence="1">
        <text>L-threonylcarbamoyladenylate + adenosine(37) in tRNA = N(6)-L-threonylcarbamoyladenosine(37) in tRNA + AMP + H(+)</text>
        <dbReference type="Rhea" id="RHEA:37059"/>
        <dbReference type="Rhea" id="RHEA-COMP:10162"/>
        <dbReference type="Rhea" id="RHEA-COMP:10163"/>
        <dbReference type="ChEBI" id="CHEBI:15378"/>
        <dbReference type="ChEBI" id="CHEBI:73682"/>
        <dbReference type="ChEBI" id="CHEBI:74411"/>
        <dbReference type="ChEBI" id="CHEBI:74418"/>
        <dbReference type="ChEBI" id="CHEBI:456215"/>
        <dbReference type="EC" id="2.3.1.234"/>
    </reaction>
</comment>
<comment type="cofactor">
    <cofactor evidence="1">
        <name>Fe(2+)</name>
        <dbReference type="ChEBI" id="CHEBI:29033"/>
    </cofactor>
    <text evidence="1">Binds 1 Fe(2+) ion per subunit.</text>
</comment>
<comment type="subcellular location">
    <subcellularLocation>
        <location evidence="1">Cytoplasm</location>
    </subcellularLocation>
</comment>
<comment type="similarity">
    <text evidence="1">Belongs to the KAE1 / TsaD family.</text>
</comment>
<organism>
    <name type="scientific">Frankia alni (strain DSM 45986 / CECT 9034 / ACN14a)</name>
    <dbReference type="NCBI Taxonomy" id="326424"/>
    <lineage>
        <taxon>Bacteria</taxon>
        <taxon>Bacillati</taxon>
        <taxon>Actinomycetota</taxon>
        <taxon>Actinomycetes</taxon>
        <taxon>Frankiales</taxon>
        <taxon>Frankiaceae</taxon>
        <taxon>Frankia</taxon>
    </lineage>
</organism>
<feature type="chain" id="PRO_0000303369" description="tRNA N6-adenosine threonylcarbamoyltransferase">
    <location>
        <begin position="1"/>
        <end position="356"/>
    </location>
</feature>
<feature type="binding site" evidence="1">
    <location>
        <position position="116"/>
    </location>
    <ligand>
        <name>Fe cation</name>
        <dbReference type="ChEBI" id="CHEBI:24875"/>
    </ligand>
</feature>
<feature type="binding site" evidence="1">
    <location>
        <position position="120"/>
    </location>
    <ligand>
        <name>Fe cation</name>
        <dbReference type="ChEBI" id="CHEBI:24875"/>
    </ligand>
</feature>
<feature type="binding site" evidence="1">
    <location>
        <begin position="139"/>
        <end position="143"/>
    </location>
    <ligand>
        <name>substrate</name>
    </ligand>
</feature>
<feature type="binding site" evidence="1">
    <location>
        <position position="174"/>
    </location>
    <ligand>
        <name>substrate</name>
    </ligand>
</feature>
<feature type="binding site" evidence="1">
    <location>
        <position position="187"/>
    </location>
    <ligand>
        <name>substrate</name>
    </ligand>
</feature>
<feature type="binding site" evidence="1">
    <location>
        <position position="191"/>
    </location>
    <ligand>
        <name>substrate</name>
    </ligand>
</feature>
<feature type="binding site" evidence="1">
    <location>
        <position position="281"/>
    </location>
    <ligand>
        <name>substrate</name>
    </ligand>
</feature>
<feature type="binding site" evidence="1">
    <location>
        <position position="309"/>
    </location>
    <ligand>
        <name>Fe cation</name>
        <dbReference type="ChEBI" id="CHEBI:24875"/>
    </ligand>
</feature>